<accession>C0MBT9</accession>
<comment type="function">
    <text evidence="1">Binds directly to 23S rRNA. The L1 stalk is quite mobile in the ribosome, and is involved in E site tRNA release.</text>
</comment>
<comment type="function">
    <text evidence="1">Protein L1 is also a translational repressor protein, it controls the translation of the L11 operon by binding to its mRNA.</text>
</comment>
<comment type="subunit">
    <text evidence="1">Part of the 50S ribosomal subunit.</text>
</comment>
<comment type="similarity">
    <text evidence="1">Belongs to the universal ribosomal protein uL1 family.</text>
</comment>
<keyword id="KW-0678">Repressor</keyword>
<keyword id="KW-0687">Ribonucleoprotein</keyword>
<keyword id="KW-0689">Ribosomal protein</keyword>
<keyword id="KW-0694">RNA-binding</keyword>
<keyword id="KW-0699">rRNA-binding</keyword>
<keyword id="KW-0810">Translation regulation</keyword>
<keyword id="KW-0820">tRNA-binding</keyword>
<sequence length="229" mass="24459">MAKKSKQMRAALEKVDSTKAYSVEEAVALAKETNFAKFDASVEVAYNLNIDVRKADQQIRGAMVLPNGTGKTQRVLVFARGAKAEEAKAAGADFVGEDDLVAKINGGWLDFDVVIATPDMMAIVGRLGRVLGPRNLMPNPKTGTVTMDVAKAVEESKGGKITYRADKAGNVQAIIGKVSFDADKLVENFKAFHEVMVKAKPATAKGTYMTNVSITTTQGVGIKVDPSSF</sequence>
<protein>
    <recommendedName>
        <fullName evidence="1">Large ribosomal subunit protein uL1</fullName>
    </recommendedName>
    <alternativeName>
        <fullName evidence="2">50S ribosomal protein L1</fullName>
    </alternativeName>
</protein>
<evidence type="ECO:0000255" key="1">
    <source>
        <dbReference type="HAMAP-Rule" id="MF_01318"/>
    </source>
</evidence>
<evidence type="ECO:0000305" key="2"/>
<name>RL1_STRE4</name>
<organism>
    <name type="scientific">Streptococcus equi subsp. equi (strain 4047)</name>
    <dbReference type="NCBI Taxonomy" id="553482"/>
    <lineage>
        <taxon>Bacteria</taxon>
        <taxon>Bacillati</taxon>
        <taxon>Bacillota</taxon>
        <taxon>Bacilli</taxon>
        <taxon>Lactobacillales</taxon>
        <taxon>Streptococcaceae</taxon>
        <taxon>Streptococcus</taxon>
    </lineage>
</organism>
<proteinExistence type="inferred from homology"/>
<dbReference type="EMBL" id="FM204883">
    <property type="protein sequence ID" value="CAW94670.1"/>
    <property type="molecule type" value="Genomic_DNA"/>
</dbReference>
<dbReference type="RefSeq" id="WP_012677559.1">
    <property type="nucleotide sequence ID" value="NC_012471.1"/>
</dbReference>
<dbReference type="SMR" id="C0MBT9"/>
<dbReference type="GeneID" id="83705328"/>
<dbReference type="KEGG" id="seu:SEQ_1650"/>
<dbReference type="HOGENOM" id="CLU_062853_0_0_9"/>
<dbReference type="OrthoDB" id="9803740at2"/>
<dbReference type="Proteomes" id="UP000001365">
    <property type="component" value="Chromosome"/>
</dbReference>
<dbReference type="GO" id="GO:0015934">
    <property type="term" value="C:large ribosomal subunit"/>
    <property type="evidence" value="ECO:0007669"/>
    <property type="project" value="InterPro"/>
</dbReference>
<dbReference type="GO" id="GO:0019843">
    <property type="term" value="F:rRNA binding"/>
    <property type="evidence" value="ECO:0007669"/>
    <property type="project" value="UniProtKB-UniRule"/>
</dbReference>
<dbReference type="GO" id="GO:0003735">
    <property type="term" value="F:structural constituent of ribosome"/>
    <property type="evidence" value="ECO:0007669"/>
    <property type="project" value="InterPro"/>
</dbReference>
<dbReference type="GO" id="GO:0000049">
    <property type="term" value="F:tRNA binding"/>
    <property type="evidence" value="ECO:0007669"/>
    <property type="project" value="UniProtKB-KW"/>
</dbReference>
<dbReference type="GO" id="GO:0006417">
    <property type="term" value="P:regulation of translation"/>
    <property type="evidence" value="ECO:0007669"/>
    <property type="project" value="UniProtKB-KW"/>
</dbReference>
<dbReference type="GO" id="GO:0006412">
    <property type="term" value="P:translation"/>
    <property type="evidence" value="ECO:0007669"/>
    <property type="project" value="UniProtKB-UniRule"/>
</dbReference>
<dbReference type="CDD" id="cd00403">
    <property type="entry name" value="Ribosomal_L1"/>
    <property type="match status" value="1"/>
</dbReference>
<dbReference type="FunFam" id="3.40.50.790:FF:000001">
    <property type="entry name" value="50S ribosomal protein L1"/>
    <property type="match status" value="1"/>
</dbReference>
<dbReference type="Gene3D" id="3.30.190.20">
    <property type="match status" value="1"/>
</dbReference>
<dbReference type="Gene3D" id="3.40.50.790">
    <property type="match status" value="1"/>
</dbReference>
<dbReference type="HAMAP" id="MF_01318_B">
    <property type="entry name" value="Ribosomal_uL1_B"/>
    <property type="match status" value="1"/>
</dbReference>
<dbReference type="InterPro" id="IPR005878">
    <property type="entry name" value="Ribosom_uL1_bac-type"/>
</dbReference>
<dbReference type="InterPro" id="IPR002143">
    <property type="entry name" value="Ribosomal_uL1"/>
</dbReference>
<dbReference type="InterPro" id="IPR023674">
    <property type="entry name" value="Ribosomal_uL1-like"/>
</dbReference>
<dbReference type="InterPro" id="IPR028364">
    <property type="entry name" value="Ribosomal_uL1/biogenesis"/>
</dbReference>
<dbReference type="InterPro" id="IPR016095">
    <property type="entry name" value="Ribosomal_uL1_3-a/b-sand"/>
</dbReference>
<dbReference type="InterPro" id="IPR023673">
    <property type="entry name" value="Ribosomal_uL1_CS"/>
</dbReference>
<dbReference type="NCBIfam" id="TIGR01169">
    <property type="entry name" value="rplA_bact"/>
    <property type="match status" value="1"/>
</dbReference>
<dbReference type="PANTHER" id="PTHR36427">
    <property type="entry name" value="54S RIBOSOMAL PROTEIN L1, MITOCHONDRIAL"/>
    <property type="match status" value="1"/>
</dbReference>
<dbReference type="PANTHER" id="PTHR36427:SF3">
    <property type="entry name" value="LARGE RIBOSOMAL SUBUNIT PROTEIN UL1M"/>
    <property type="match status" value="1"/>
</dbReference>
<dbReference type="Pfam" id="PF00687">
    <property type="entry name" value="Ribosomal_L1"/>
    <property type="match status" value="1"/>
</dbReference>
<dbReference type="PIRSF" id="PIRSF002155">
    <property type="entry name" value="Ribosomal_L1"/>
    <property type="match status" value="1"/>
</dbReference>
<dbReference type="SUPFAM" id="SSF56808">
    <property type="entry name" value="Ribosomal protein L1"/>
    <property type="match status" value="1"/>
</dbReference>
<dbReference type="PROSITE" id="PS01199">
    <property type="entry name" value="RIBOSOMAL_L1"/>
    <property type="match status" value="1"/>
</dbReference>
<gene>
    <name evidence="1" type="primary">rplA</name>
    <name type="ordered locus">SEQ_1650</name>
</gene>
<reference key="1">
    <citation type="journal article" date="2009" name="PLoS Pathog.">
        <title>Genomic evidence for the evolution of Streptococcus equi: host restriction, increased virulence, and genetic exchange with human pathogens.</title>
        <authorList>
            <person name="Holden M.T.G."/>
            <person name="Heather Z."/>
            <person name="Paillot R."/>
            <person name="Steward K.F."/>
            <person name="Webb K."/>
            <person name="Ainslie F."/>
            <person name="Jourdan T."/>
            <person name="Bason N.C."/>
            <person name="Holroyd N.E."/>
            <person name="Mungall K."/>
            <person name="Quail M.A."/>
            <person name="Sanders M."/>
            <person name="Simmonds M."/>
            <person name="Willey D."/>
            <person name="Brooks K."/>
            <person name="Aanensen D.M."/>
            <person name="Spratt B.G."/>
            <person name="Jolley K.A."/>
            <person name="Maiden M.C.J."/>
            <person name="Kehoe M."/>
            <person name="Chanter N."/>
            <person name="Bentley S.D."/>
            <person name="Robinson C."/>
            <person name="Maskell D.J."/>
            <person name="Parkhill J."/>
            <person name="Waller A.S."/>
        </authorList>
    </citation>
    <scope>NUCLEOTIDE SEQUENCE [LARGE SCALE GENOMIC DNA]</scope>
    <source>
        <strain>4047</strain>
    </source>
</reference>
<feature type="chain" id="PRO_1000165700" description="Large ribosomal subunit protein uL1">
    <location>
        <begin position="1"/>
        <end position="229"/>
    </location>
</feature>